<name>INDB_DICD3</name>
<organism>
    <name type="scientific">Dickeya dadantii (strain 3937)</name>
    <name type="common">Erwinia chrysanthemi (strain 3937)</name>
    <dbReference type="NCBI Taxonomy" id="198628"/>
    <lineage>
        <taxon>Bacteria</taxon>
        <taxon>Pseudomonadati</taxon>
        <taxon>Pseudomonadota</taxon>
        <taxon>Gammaproteobacteria</taxon>
        <taxon>Enterobacterales</taxon>
        <taxon>Pectobacteriaceae</taxon>
        <taxon>Dickeya</taxon>
    </lineage>
</organism>
<feature type="chain" id="PRO_0000461771" description="Probable phosphatase IndB">
    <location>
        <begin position="1"/>
        <end position="230"/>
    </location>
</feature>
<feature type="active site" description="Nucleophile" evidence="1">
    <location>
        <position position="8"/>
    </location>
</feature>
<feature type="active site" description="Proton donor" evidence="1">
    <location>
        <position position="10"/>
    </location>
</feature>
<feature type="binding site" evidence="1">
    <location>
        <position position="8"/>
    </location>
    <ligand>
        <name>Mg(2+)</name>
        <dbReference type="ChEBI" id="CHEBI:18420"/>
    </ligand>
</feature>
<feature type="binding site" evidence="1">
    <location>
        <position position="10"/>
    </location>
    <ligand>
        <name>Mg(2+)</name>
        <dbReference type="ChEBI" id="CHEBI:18420"/>
    </ligand>
</feature>
<feature type="binding site" evidence="1">
    <location>
        <position position="169"/>
    </location>
    <ligand>
        <name>Mg(2+)</name>
        <dbReference type="ChEBI" id="CHEBI:18420"/>
    </ligand>
</feature>
<reference evidence="7" key="1">
    <citation type="journal article" date="2002" name="J. Bacteriol.">
        <title>Characterization of indigoidine biosynthetic genes in Erwinia chrysanthemi and role of this blue pigment in pathogenicity.</title>
        <authorList>
            <person name="Reverchon S."/>
            <person name="Rouanet C."/>
            <person name="Expert D."/>
            <person name="Nasser W."/>
        </authorList>
    </citation>
    <scope>NUCLEOTIDE SEQUENCE [GENOMIC DNA]</scope>
    <scope>FUNCTION</scope>
    <scope>INDUCTION</scope>
    <scope>DISRUPTION PHENOTYPE</scope>
    <source>
        <strain>3937</strain>
    </source>
</reference>
<reference evidence="6" key="2">
    <citation type="journal article" date="2011" name="J. Bacteriol.">
        <title>Genome sequence of the plant-pathogenic bacterium Dickeya dadantii 3937.</title>
        <authorList>
            <person name="Glasner J.D."/>
            <person name="Yang C.H."/>
            <person name="Reverchon S."/>
            <person name="Hugouvieux-Cotte-Pattat N."/>
            <person name="Condemine G."/>
            <person name="Bohin J.P."/>
            <person name="Van Gijsegem F."/>
            <person name="Yang S."/>
            <person name="Franza T."/>
            <person name="Expert D."/>
            <person name="Plunkett G. III"/>
            <person name="San Francisco M.J."/>
            <person name="Charkowski A.O."/>
            <person name="Py B."/>
            <person name="Bell K."/>
            <person name="Rauscher L."/>
            <person name="Rodriguez-Palenzuela P."/>
            <person name="Toussaint A."/>
            <person name="Holeva M.C."/>
            <person name="He S.Y."/>
            <person name="Douet V."/>
            <person name="Boccara M."/>
            <person name="Blanco C."/>
            <person name="Toth I."/>
            <person name="Anderson B.D."/>
            <person name="Biehl B.S."/>
            <person name="Mau B."/>
            <person name="Flynn S.M."/>
            <person name="Barras F."/>
            <person name="Lindeberg M."/>
            <person name="Birch P.R."/>
            <person name="Tsuyumu S."/>
            <person name="Shi X."/>
            <person name="Hibbing M."/>
            <person name="Yap M.N."/>
            <person name="Carpentier M."/>
            <person name="Dassa E."/>
            <person name="Umehara M."/>
            <person name="Kim J.F."/>
            <person name="Rusch M."/>
            <person name="Soni P."/>
            <person name="Mayhew G.F."/>
            <person name="Fouts D.E."/>
            <person name="Gill S.R."/>
            <person name="Blattner F.R."/>
            <person name="Keen N.T."/>
            <person name="Perna N.T."/>
        </authorList>
    </citation>
    <scope>NUCLEOTIDE SEQUENCE [LARGE SCALE GENOMIC DNA]</scope>
    <source>
        <strain>3937</strain>
    </source>
</reference>
<sequence length="230" mass="24298">MKPLVIFDLDGTLVDTPSGIVSAFITALRDLSMPFEDRRAIRATIGLPLEKAFGQILALPVEDERVTAAVRQYQAVFREQVLPQAPGLVFPGVVEGLALLKGQGYTLAVATSKVFASAKALLEAAGLWSYFDLVLGADMVAHPKPHPEMGLLAMSRLGADAATTAMVGDTTHDLLMAKQAGMAAIGVTWGIHTTDQLKAAEPQVIVDTFSEVVGAAHALLKLSSSPVSYC</sequence>
<gene>
    <name evidence="3" type="primary">indB</name>
    <name evidence="6" type="ordered locus">Dda3937_00973</name>
</gene>
<dbReference type="EC" id="3.-.-.-" evidence="5"/>
<dbReference type="EMBL" id="AJ277403">
    <property type="protein sequence ID" value="CAB87989.1"/>
    <property type="molecule type" value="Genomic_DNA"/>
</dbReference>
<dbReference type="EMBL" id="CP002038">
    <property type="protein sequence ID" value="ADN00616.1"/>
    <property type="molecule type" value="Genomic_DNA"/>
</dbReference>
<dbReference type="RefSeq" id="WP_013320011.1">
    <property type="nucleotide sequence ID" value="NC_014500.1"/>
</dbReference>
<dbReference type="KEGG" id="ddd:Dda3937_00973"/>
<dbReference type="PATRIC" id="fig|198628.6.peg.4368"/>
<dbReference type="eggNOG" id="COG0546">
    <property type="taxonomic scope" value="Bacteria"/>
</dbReference>
<dbReference type="HOGENOM" id="CLU_045011_19_2_6"/>
<dbReference type="OrthoDB" id="9800058at2"/>
<dbReference type="Proteomes" id="UP000006859">
    <property type="component" value="Chromosome"/>
</dbReference>
<dbReference type="GO" id="GO:0005829">
    <property type="term" value="C:cytosol"/>
    <property type="evidence" value="ECO:0007669"/>
    <property type="project" value="TreeGrafter"/>
</dbReference>
<dbReference type="GO" id="GO:0046872">
    <property type="term" value="F:metal ion binding"/>
    <property type="evidence" value="ECO:0007669"/>
    <property type="project" value="UniProtKB-KW"/>
</dbReference>
<dbReference type="GO" id="GO:0008967">
    <property type="term" value="F:phosphoglycolate phosphatase activity"/>
    <property type="evidence" value="ECO:0007669"/>
    <property type="project" value="TreeGrafter"/>
</dbReference>
<dbReference type="GO" id="GO:0006281">
    <property type="term" value="P:DNA repair"/>
    <property type="evidence" value="ECO:0007669"/>
    <property type="project" value="TreeGrafter"/>
</dbReference>
<dbReference type="FunFam" id="3.40.50.1000:FF:000022">
    <property type="entry name" value="Phosphoglycolate phosphatase"/>
    <property type="match status" value="1"/>
</dbReference>
<dbReference type="Gene3D" id="3.40.50.1000">
    <property type="entry name" value="HAD superfamily/HAD-like"/>
    <property type="match status" value="1"/>
</dbReference>
<dbReference type="Gene3D" id="1.10.150.240">
    <property type="entry name" value="Putative phosphatase, domain 2"/>
    <property type="match status" value="1"/>
</dbReference>
<dbReference type="InterPro" id="IPR050155">
    <property type="entry name" value="HAD-like_hydrolase_sf"/>
</dbReference>
<dbReference type="InterPro" id="IPR036412">
    <property type="entry name" value="HAD-like_sf"/>
</dbReference>
<dbReference type="InterPro" id="IPR006439">
    <property type="entry name" value="HAD-SF_hydro_IA"/>
</dbReference>
<dbReference type="InterPro" id="IPR041492">
    <property type="entry name" value="HAD_2"/>
</dbReference>
<dbReference type="InterPro" id="IPR023214">
    <property type="entry name" value="HAD_sf"/>
</dbReference>
<dbReference type="InterPro" id="IPR023198">
    <property type="entry name" value="PGP-like_dom2"/>
</dbReference>
<dbReference type="NCBIfam" id="TIGR01549">
    <property type="entry name" value="HAD-SF-IA-v1"/>
    <property type="match status" value="1"/>
</dbReference>
<dbReference type="NCBIfam" id="TIGR01509">
    <property type="entry name" value="HAD-SF-IA-v3"/>
    <property type="match status" value="1"/>
</dbReference>
<dbReference type="PANTHER" id="PTHR43434:SF24">
    <property type="entry name" value="HYDROLASE-RELATED"/>
    <property type="match status" value="1"/>
</dbReference>
<dbReference type="PANTHER" id="PTHR43434">
    <property type="entry name" value="PHOSPHOGLYCOLATE PHOSPHATASE"/>
    <property type="match status" value="1"/>
</dbReference>
<dbReference type="Pfam" id="PF13419">
    <property type="entry name" value="HAD_2"/>
    <property type="match status" value="1"/>
</dbReference>
<dbReference type="PRINTS" id="PR00413">
    <property type="entry name" value="HADHALOGNASE"/>
</dbReference>
<dbReference type="SFLD" id="SFLDG01135">
    <property type="entry name" value="C1.5.6:_HAD__Beta-PGM__Phospha"/>
    <property type="match status" value="1"/>
</dbReference>
<dbReference type="SFLD" id="SFLDS00003">
    <property type="entry name" value="Haloacid_Dehalogenase"/>
    <property type="match status" value="1"/>
</dbReference>
<dbReference type="SUPFAM" id="SSF56784">
    <property type="entry name" value="HAD-like"/>
    <property type="match status" value="1"/>
</dbReference>
<comment type="function">
    <text evidence="2">Part of an operon that could be involved in the biosynthesis of the blue pigment indigoidine, which is implicated in pathogenicity and protection from oxidative stress.</text>
</comment>
<comment type="cofactor">
    <cofactor evidence="1">
        <name>Mg(2+)</name>
        <dbReference type="ChEBI" id="CHEBI:18420"/>
    </cofactor>
</comment>
<comment type="induction">
    <text evidence="2">Moderately expressed in the wild-type strain (PubMed:11790734). Expression is repressed by the HTH-type transcriptional regulator PecS (PubMed:11790734). Weakly induced under oxidative stress (PubMed:11790734). Expression is 10-fold induced during infection of Saintpaulia plants (PubMed:11790734).</text>
</comment>
<comment type="disruption phenotype">
    <text evidence="2">The disruption mutant cannot synthesize indigoidine.</text>
</comment>
<comment type="similarity">
    <text evidence="4">Belongs to the HAD-like hydrolase superfamily.</text>
</comment>
<proteinExistence type="evidence at transcript level"/>
<evidence type="ECO:0000250" key="1">
    <source>
        <dbReference type="UniProtKB" id="Q96GD0"/>
    </source>
</evidence>
<evidence type="ECO:0000269" key="2">
    <source>
    </source>
</evidence>
<evidence type="ECO:0000303" key="3">
    <source>
    </source>
</evidence>
<evidence type="ECO:0000305" key="4"/>
<evidence type="ECO:0000305" key="5">
    <source>
    </source>
</evidence>
<evidence type="ECO:0000312" key="6">
    <source>
        <dbReference type="EMBL" id="ADN00616.1"/>
    </source>
</evidence>
<evidence type="ECO:0000312" key="7">
    <source>
        <dbReference type="EMBL" id="CAB87989.1"/>
    </source>
</evidence>
<accession>Q9L392</accession>
<accession>E0SMH7</accession>
<keyword id="KW-0378">Hydrolase</keyword>
<keyword id="KW-0460">Magnesium</keyword>
<keyword id="KW-0479">Metal-binding</keyword>
<keyword id="KW-1185">Reference proteome</keyword>
<protein>
    <recommendedName>
        <fullName evidence="4">Probable phosphatase IndB</fullName>
        <ecNumber evidence="5">3.-.-.-</ecNumber>
    </recommendedName>
</protein>